<comment type="function">
    <text evidence="1">Catalyzes the formation of 4-diphosphocytidyl-2-C-methyl-D-erythritol from CTP and 2-C-methyl-D-erythritol 4-phosphate (MEP).</text>
</comment>
<comment type="catalytic activity">
    <reaction evidence="1">
        <text>2-C-methyl-D-erythritol 4-phosphate + CTP + H(+) = 4-CDP-2-C-methyl-D-erythritol + diphosphate</text>
        <dbReference type="Rhea" id="RHEA:13429"/>
        <dbReference type="ChEBI" id="CHEBI:15378"/>
        <dbReference type="ChEBI" id="CHEBI:33019"/>
        <dbReference type="ChEBI" id="CHEBI:37563"/>
        <dbReference type="ChEBI" id="CHEBI:57823"/>
        <dbReference type="ChEBI" id="CHEBI:58262"/>
        <dbReference type="EC" id="2.7.7.60"/>
    </reaction>
</comment>
<comment type="pathway">
    <text evidence="1">Isoprenoid biosynthesis; isopentenyl diphosphate biosynthesis via DXP pathway; isopentenyl diphosphate from 1-deoxy-D-xylulose 5-phosphate: step 2/6.</text>
</comment>
<comment type="similarity">
    <text evidence="1">Belongs to the IspD/TarI cytidylyltransferase family. IspD subfamily.</text>
</comment>
<evidence type="ECO:0000255" key="1">
    <source>
        <dbReference type="HAMAP-Rule" id="MF_00108"/>
    </source>
</evidence>
<reference key="1">
    <citation type="submission" date="2008-06" db="EMBL/GenBank/DDBJ databases">
        <title>Complete sequence of Chlorobaculum parvum NCIB 8327.</title>
        <authorList>
            <consortium name="US DOE Joint Genome Institute"/>
            <person name="Lucas S."/>
            <person name="Copeland A."/>
            <person name="Lapidus A."/>
            <person name="Glavina del Rio T."/>
            <person name="Dalin E."/>
            <person name="Tice H."/>
            <person name="Bruce D."/>
            <person name="Goodwin L."/>
            <person name="Pitluck S."/>
            <person name="Schmutz J."/>
            <person name="Larimer F."/>
            <person name="Land M."/>
            <person name="Hauser L."/>
            <person name="Kyrpides N."/>
            <person name="Mikhailova N."/>
            <person name="Zhao F."/>
            <person name="Li T."/>
            <person name="Liu Z."/>
            <person name="Overmann J."/>
            <person name="Bryant D.A."/>
            <person name="Richardson P."/>
        </authorList>
    </citation>
    <scope>NUCLEOTIDE SEQUENCE [LARGE SCALE GENOMIC DNA]</scope>
    <source>
        <strain>DSM 263 / NCIMB 8327</strain>
    </source>
</reference>
<accession>B3QP85</accession>
<dbReference type="EC" id="2.7.7.60" evidence="1"/>
<dbReference type="EMBL" id="CP001099">
    <property type="protein sequence ID" value="ACF11738.1"/>
    <property type="molecule type" value="Genomic_DNA"/>
</dbReference>
<dbReference type="RefSeq" id="WP_012502571.1">
    <property type="nucleotide sequence ID" value="NC_011027.1"/>
</dbReference>
<dbReference type="SMR" id="B3QP85"/>
<dbReference type="STRING" id="517417.Cpar_1335"/>
<dbReference type="KEGG" id="cpc:Cpar_1335"/>
<dbReference type="eggNOG" id="COG1211">
    <property type="taxonomic scope" value="Bacteria"/>
</dbReference>
<dbReference type="HOGENOM" id="CLU_061281_2_2_10"/>
<dbReference type="OrthoDB" id="9806837at2"/>
<dbReference type="UniPathway" id="UPA00056">
    <property type="reaction ID" value="UER00093"/>
</dbReference>
<dbReference type="Proteomes" id="UP000008811">
    <property type="component" value="Chromosome"/>
</dbReference>
<dbReference type="GO" id="GO:0050518">
    <property type="term" value="F:2-C-methyl-D-erythritol 4-phosphate cytidylyltransferase activity"/>
    <property type="evidence" value="ECO:0007669"/>
    <property type="project" value="UniProtKB-UniRule"/>
</dbReference>
<dbReference type="GO" id="GO:0019288">
    <property type="term" value="P:isopentenyl diphosphate biosynthetic process, methylerythritol 4-phosphate pathway"/>
    <property type="evidence" value="ECO:0007669"/>
    <property type="project" value="UniProtKB-UniRule"/>
</dbReference>
<dbReference type="CDD" id="cd02516">
    <property type="entry name" value="CDP-ME_synthetase"/>
    <property type="match status" value="1"/>
</dbReference>
<dbReference type="FunFam" id="3.90.550.10:FF:000003">
    <property type="entry name" value="2-C-methyl-D-erythritol 4-phosphate cytidylyltransferase"/>
    <property type="match status" value="1"/>
</dbReference>
<dbReference type="Gene3D" id="3.90.550.10">
    <property type="entry name" value="Spore Coat Polysaccharide Biosynthesis Protein SpsA, Chain A"/>
    <property type="match status" value="1"/>
</dbReference>
<dbReference type="HAMAP" id="MF_00108">
    <property type="entry name" value="IspD"/>
    <property type="match status" value="1"/>
</dbReference>
<dbReference type="InterPro" id="IPR001228">
    <property type="entry name" value="IspD"/>
</dbReference>
<dbReference type="InterPro" id="IPR034683">
    <property type="entry name" value="IspD/TarI"/>
</dbReference>
<dbReference type="InterPro" id="IPR050088">
    <property type="entry name" value="IspD/TarI_cytidylyltransf_bact"/>
</dbReference>
<dbReference type="InterPro" id="IPR018294">
    <property type="entry name" value="ISPD_synthase_CS"/>
</dbReference>
<dbReference type="InterPro" id="IPR029044">
    <property type="entry name" value="Nucleotide-diphossugar_trans"/>
</dbReference>
<dbReference type="PANTHER" id="PTHR32125">
    <property type="entry name" value="2-C-METHYL-D-ERYTHRITOL 4-PHOSPHATE CYTIDYLYLTRANSFERASE, CHLOROPLASTIC"/>
    <property type="match status" value="1"/>
</dbReference>
<dbReference type="PANTHER" id="PTHR32125:SF4">
    <property type="entry name" value="2-C-METHYL-D-ERYTHRITOL 4-PHOSPHATE CYTIDYLYLTRANSFERASE, CHLOROPLASTIC"/>
    <property type="match status" value="1"/>
</dbReference>
<dbReference type="Pfam" id="PF01128">
    <property type="entry name" value="IspD"/>
    <property type="match status" value="1"/>
</dbReference>
<dbReference type="SUPFAM" id="SSF53448">
    <property type="entry name" value="Nucleotide-diphospho-sugar transferases"/>
    <property type="match status" value="1"/>
</dbReference>
<dbReference type="PROSITE" id="PS01295">
    <property type="entry name" value="ISPD"/>
    <property type="match status" value="1"/>
</dbReference>
<organism>
    <name type="scientific">Chlorobaculum parvum (strain DSM 263 / NCIMB 8327)</name>
    <name type="common">Chlorobium vibrioforme subsp. thiosulfatophilum</name>
    <dbReference type="NCBI Taxonomy" id="517417"/>
    <lineage>
        <taxon>Bacteria</taxon>
        <taxon>Pseudomonadati</taxon>
        <taxon>Chlorobiota</taxon>
        <taxon>Chlorobiia</taxon>
        <taxon>Chlorobiales</taxon>
        <taxon>Chlorobiaceae</taxon>
        <taxon>Chlorobaculum</taxon>
    </lineage>
</organism>
<feature type="chain" id="PRO_1000094316" description="2-C-methyl-D-erythritol 4-phosphate cytidylyltransferase">
    <location>
        <begin position="1"/>
        <end position="246"/>
    </location>
</feature>
<feature type="site" description="Transition state stabilizer" evidence="1">
    <location>
        <position position="15"/>
    </location>
</feature>
<feature type="site" description="Transition state stabilizer" evidence="1">
    <location>
        <position position="24"/>
    </location>
</feature>
<feature type="site" description="Positions MEP for the nucleophilic attack" evidence="1">
    <location>
        <position position="164"/>
    </location>
</feature>
<feature type="site" description="Positions MEP for the nucleophilic attack" evidence="1">
    <location>
        <position position="222"/>
    </location>
</feature>
<gene>
    <name evidence="1" type="primary">ispD</name>
    <name type="ordered locus">Cpar_1335</name>
</gene>
<keyword id="KW-0414">Isoprene biosynthesis</keyword>
<keyword id="KW-0548">Nucleotidyltransferase</keyword>
<keyword id="KW-0808">Transferase</keyword>
<sequence length="246" mass="27118">MKTVAIIAASGVGKRMKLDGGMSKQMIEIGGHTVIWHTMKAFQDAESVDAVYIATKSDSIEPFKQLARENGFTKIHSIIEGGKERQDSIRNCMDLIEEEIESSGVMPDAILVHDGARPFIQPEEIDEIARISAEHGACVPATKPKDTIKYIGRTPEVFGETLDRSRLLQVQTPQGFTPAKLIEAHRKAASDGVYATDDAALVERYFPEQEIHVYEMGYHNIKITTPEDVPVGEAILAGLKARKSEN</sequence>
<name>ISPD_CHLP8</name>
<protein>
    <recommendedName>
        <fullName evidence="1">2-C-methyl-D-erythritol 4-phosphate cytidylyltransferase</fullName>
        <ecNumber evidence="1">2.7.7.60</ecNumber>
    </recommendedName>
    <alternativeName>
        <fullName evidence="1">4-diphosphocytidyl-2C-methyl-D-erythritol synthase</fullName>
    </alternativeName>
    <alternativeName>
        <fullName evidence="1">MEP cytidylyltransferase</fullName>
        <shortName evidence="1">MCT</shortName>
    </alternativeName>
</protein>
<proteinExistence type="inferred from homology"/>